<accession>Q6F7S5</accession>
<name>RS14_ACIAD</name>
<protein>
    <recommendedName>
        <fullName evidence="1">Small ribosomal subunit protein uS14</fullName>
    </recommendedName>
    <alternativeName>
        <fullName evidence="2">30S ribosomal protein S14</fullName>
    </alternativeName>
</protein>
<organism>
    <name type="scientific">Acinetobacter baylyi (strain ATCC 33305 / BD413 / ADP1)</name>
    <dbReference type="NCBI Taxonomy" id="62977"/>
    <lineage>
        <taxon>Bacteria</taxon>
        <taxon>Pseudomonadati</taxon>
        <taxon>Pseudomonadota</taxon>
        <taxon>Gammaproteobacteria</taxon>
        <taxon>Moraxellales</taxon>
        <taxon>Moraxellaceae</taxon>
        <taxon>Acinetobacter</taxon>
    </lineage>
</organism>
<dbReference type="EMBL" id="CR543861">
    <property type="protein sequence ID" value="CAG69890.1"/>
    <property type="molecule type" value="Genomic_DNA"/>
</dbReference>
<dbReference type="RefSeq" id="WP_004924130.1">
    <property type="nucleotide sequence ID" value="NC_005966.1"/>
</dbReference>
<dbReference type="SMR" id="Q6F7S5"/>
<dbReference type="STRING" id="202950.GCA_001485005_02949"/>
<dbReference type="GeneID" id="45235421"/>
<dbReference type="KEGG" id="aci:ACIAD3206"/>
<dbReference type="eggNOG" id="COG0199">
    <property type="taxonomic scope" value="Bacteria"/>
</dbReference>
<dbReference type="HOGENOM" id="CLU_139869_0_1_6"/>
<dbReference type="OrthoDB" id="9810484at2"/>
<dbReference type="BioCyc" id="ASP62977:ACIAD_RS14530-MONOMER"/>
<dbReference type="Proteomes" id="UP000000430">
    <property type="component" value="Chromosome"/>
</dbReference>
<dbReference type="GO" id="GO:0005737">
    <property type="term" value="C:cytoplasm"/>
    <property type="evidence" value="ECO:0007669"/>
    <property type="project" value="UniProtKB-ARBA"/>
</dbReference>
<dbReference type="GO" id="GO:0015935">
    <property type="term" value="C:small ribosomal subunit"/>
    <property type="evidence" value="ECO:0007669"/>
    <property type="project" value="TreeGrafter"/>
</dbReference>
<dbReference type="GO" id="GO:0019843">
    <property type="term" value="F:rRNA binding"/>
    <property type="evidence" value="ECO:0007669"/>
    <property type="project" value="UniProtKB-UniRule"/>
</dbReference>
<dbReference type="GO" id="GO:0003735">
    <property type="term" value="F:structural constituent of ribosome"/>
    <property type="evidence" value="ECO:0007669"/>
    <property type="project" value="InterPro"/>
</dbReference>
<dbReference type="GO" id="GO:0006412">
    <property type="term" value="P:translation"/>
    <property type="evidence" value="ECO:0007669"/>
    <property type="project" value="UniProtKB-UniRule"/>
</dbReference>
<dbReference type="FunFam" id="1.10.287.1480:FF:000001">
    <property type="entry name" value="30S ribosomal protein S14"/>
    <property type="match status" value="1"/>
</dbReference>
<dbReference type="Gene3D" id="1.10.287.1480">
    <property type="match status" value="1"/>
</dbReference>
<dbReference type="HAMAP" id="MF_00537">
    <property type="entry name" value="Ribosomal_uS14_1"/>
    <property type="match status" value="1"/>
</dbReference>
<dbReference type="InterPro" id="IPR001209">
    <property type="entry name" value="Ribosomal_uS14"/>
</dbReference>
<dbReference type="InterPro" id="IPR023036">
    <property type="entry name" value="Ribosomal_uS14_bac/plastid"/>
</dbReference>
<dbReference type="InterPro" id="IPR018271">
    <property type="entry name" value="Ribosomal_uS14_CS"/>
</dbReference>
<dbReference type="NCBIfam" id="NF006477">
    <property type="entry name" value="PRK08881.1"/>
    <property type="match status" value="1"/>
</dbReference>
<dbReference type="PANTHER" id="PTHR19836">
    <property type="entry name" value="30S RIBOSOMAL PROTEIN S14"/>
    <property type="match status" value="1"/>
</dbReference>
<dbReference type="PANTHER" id="PTHR19836:SF19">
    <property type="entry name" value="SMALL RIBOSOMAL SUBUNIT PROTEIN US14M"/>
    <property type="match status" value="1"/>
</dbReference>
<dbReference type="Pfam" id="PF00253">
    <property type="entry name" value="Ribosomal_S14"/>
    <property type="match status" value="1"/>
</dbReference>
<dbReference type="SUPFAM" id="SSF57716">
    <property type="entry name" value="Glucocorticoid receptor-like (DNA-binding domain)"/>
    <property type="match status" value="1"/>
</dbReference>
<dbReference type="PROSITE" id="PS00527">
    <property type="entry name" value="RIBOSOMAL_S14"/>
    <property type="match status" value="1"/>
</dbReference>
<comment type="function">
    <text evidence="1">Binds 16S rRNA, required for the assembly of 30S particles and may also be responsible for determining the conformation of the 16S rRNA at the A site.</text>
</comment>
<comment type="subunit">
    <text evidence="1">Part of the 30S ribosomal subunit. Contacts proteins S3 and S10.</text>
</comment>
<comment type="similarity">
    <text evidence="1">Belongs to the universal ribosomal protein uS14 family.</text>
</comment>
<reference key="1">
    <citation type="journal article" date="2004" name="Nucleic Acids Res.">
        <title>Unique features revealed by the genome sequence of Acinetobacter sp. ADP1, a versatile and naturally transformation competent bacterium.</title>
        <authorList>
            <person name="Barbe V."/>
            <person name="Vallenet D."/>
            <person name="Fonknechten N."/>
            <person name="Kreimeyer A."/>
            <person name="Oztas S."/>
            <person name="Labarre L."/>
            <person name="Cruveiller S."/>
            <person name="Robert C."/>
            <person name="Duprat S."/>
            <person name="Wincker P."/>
            <person name="Ornston L.N."/>
            <person name="Weissenbach J."/>
            <person name="Marliere P."/>
            <person name="Cohen G.N."/>
            <person name="Medigue C."/>
        </authorList>
    </citation>
    <scope>NUCLEOTIDE SEQUENCE [LARGE SCALE GENOMIC DNA]</scope>
    <source>
        <strain>ATCC 33305 / BD413 / ADP1</strain>
    </source>
</reference>
<proteinExistence type="inferred from homology"/>
<evidence type="ECO:0000255" key="1">
    <source>
        <dbReference type="HAMAP-Rule" id="MF_00537"/>
    </source>
</evidence>
<evidence type="ECO:0000305" key="2"/>
<gene>
    <name evidence="1" type="primary">rpsN</name>
    <name type="ordered locus">ACIAD3206</name>
</gene>
<sequence length="101" mass="11414">MAKKGMINRELKREKTVAKYAAKRAELKATIANVNATDEERFDAMLKLQALPRNASPVRLRNRCGLTGRPHGYFRKFGLSRNKLRDTVMQGDVPGVVKASW</sequence>
<feature type="chain" id="PRO_1000128274" description="Small ribosomal subunit protein uS14">
    <location>
        <begin position="1"/>
        <end position="101"/>
    </location>
</feature>
<keyword id="KW-0687">Ribonucleoprotein</keyword>
<keyword id="KW-0689">Ribosomal protein</keyword>
<keyword id="KW-0694">RNA-binding</keyword>
<keyword id="KW-0699">rRNA-binding</keyword>